<name>LEU3_CLASE</name>
<organism>
    <name type="scientific">Clavibacter sepedonicus</name>
    <name type="common">Clavibacter michiganensis subsp. sepedonicus</name>
    <dbReference type="NCBI Taxonomy" id="31964"/>
    <lineage>
        <taxon>Bacteria</taxon>
        <taxon>Bacillati</taxon>
        <taxon>Actinomycetota</taxon>
        <taxon>Actinomycetes</taxon>
        <taxon>Micrococcales</taxon>
        <taxon>Microbacteriaceae</taxon>
        <taxon>Clavibacter</taxon>
    </lineage>
</organism>
<proteinExistence type="inferred from homology"/>
<sequence length="355" mass="37195">MPRTISLAVVPGDGIGPEVVHEALRVLREAVPADVSLDTTQYPFGAGHFLETGQILTDSDLAALAQHDAILLGAVGGDPRDARLAGGIIERGLLLKLRFAFDHYINLRPTALLPGVASPLAAPGQVDFVVVREGTEGPYAGNGGVLRRGTEHEIATEVSVNTAHGVERTVRFAFELAEKRDRKRVTLVHKTNVLTFAGSLWQRTVDRVAAEHPDVTVDYLHVDATMIFLVTDPSRFDVIVSDNLFGDIITDLAAAISGGIGLAASGNVNPTGAFPSMFEPVHGSAPDIAGQQKADPTAAILSVALLLDHLGLSEAAARVSAAVSDDLAARATGDAAPRSTAEVGDAILRALSTNH</sequence>
<dbReference type="EC" id="1.1.1.85" evidence="1"/>
<dbReference type="EMBL" id="AM849034">
    <property type="protein sequence ID" value="CAQ01535.1"/>
    <property type="molecule type" value="Genomic_DNA"/>
</dbReference>
<dbReference type="RefSeq" id="WP_012298802.1">
    <property type="nucleotide sequence ID" value="NZ_MZMN01000003.1"/>
</dbReference>
<dbReference type="SMR" id="B0RIP4"/>
<dbReference type="STRING" id="31964.CMS1424"/>
<dbReference type="KEGG" id="cms:CMS1424"/>
<dbReference type="eggNOG" id="COG0473">
    <property type="taxonomic scope" value="Bacteria"/>
</dbReference>
<dbReference type="HOGENOM" id="CLU_031953_0_1_11"/>
<dbReference type="OrthoDB" id="5289857at2"/>
<dbReference type="UniPathway" id="UPA00048">
    <property type="reaction ID" value="UER00072"/>
</dbReference>
<dbReference type="Proteomes" id="UP000001318">
    <property type="component" value="Chromosome"/>
</dbReference>
<dbReference type="GO" id="GO:0005737">
    <property type="term" value="C:cytoplasm"/>
    <property type="evidence" value="ECO:0007669"/>
    <property type="project" value="UniProtKB-SubCell"/>
</dbReference>
<dbReference type="GO" id="GO:0003862">
    <property type="term" value="F:3-isopropylmalate dehydrogenase activity"/>
    <property type="evidence" value="ECO:0007669"/>
    <property type="project" value="UniProtKB-UniRule"/>
</dbReference>
<dbReference type="GO" id="GO:0000287">
    <property type="term" value="F:magnesium ion binding"/>
    <property type="evidence" value="ECO:0007669"/>
    <property type="project" value="InterPro"/>
</dbReference>
<dbReference type="GO" id="GO:0051287">
    <property type="term" value="F:NAD binding"/>
    <property type="evidence" value="ECO:0007669"/>
    <property type="project" value="InterPro"/>
</dbReference>
<dbReference type="GO" id="GO:0009098">
    <property type="term" value="P:L-leucine biosynthetic process"/>
    <property type="evidence" value="ECO:0007669"/>
    <property type="project" value="UniProtKB-UniRule"/>
</dbReference>
<dbReference type="Gene3D" id="3.40.718.10">
    <property type="entry name" value="Isopropylmalate Dehydrogenase"/>
    <property type="match status" value="1"/>
</dbReference>
<dbReference type="HAMAP" id="MF_01035">
    <property type="entry name" value="LeuB_type2"/>
    <property type="match status" value="1"/>
</dbReference>
<dbReference type="InterPro" id="IPR050501">
    <property type="entry name" value="ICDH/IPMDH"/>
</dbReference>
<dbReference type="InterPro" id="IPR019818">
    <property type="entry name" value="IsoCit/isopropylmalate_DH_CS"/>
</dbReference>
<dbReference type="InterPro" id="IPR024084">
    <property type="entry name" value="IsoPropMal-DH-like_dom"/>
</dbReference>
<dbReference type="InterPro" id="IPR023698">
    <property type="entry name" value="LeuB_actb"/>
</dbReference>
<dbReference type="NCBIfam" id="NF002898">
    <property type="entry name" value="PRK03437.1"/>
    <property type="match status" value="1"/>
</dbReference>
<dbReference type="PANTHER" id="PTHR43275">
    <property type="entry name" value="D-MALATE DEHYDROGENASE [DECARBOXYLATING]"/>
    <property type="match status" value="1"/>
</dbReference>
<dbReference type="PANTHER" id="PTHR43275:SF1">
    <property type="entry name" value="D-MALATE DEHYDROGENASE [DECARBOXYLATING]"/>
    <property type="match status" value="1"/>
</dbReference>
<dbReference type="Pfam" id="PF00180">
    <property type="entry name" value="Iso_dh"/>
    <property type="match status" value="1"/>
</dbReference>
<dbReference type="SMART" id="SM01329">
    <property type="entry name" value="Iso_dh"/>
    <property type="match status" value="1"/>
</dbReference>
<dbReference type="SUPFAM" id="SSF53659">
    <property type="entry name" value="Isocitrate/Isopropylmalate dehydrogenase-like"/>
    <property type="match status" value="1"/>
</dbReference>
<dbReference type="PROSITE" id="PS00470">
    <property type="entry name" value="IDH_IMDH"/>
    <property type="match status" value="1"/>
</dbReference>
<keyword id="KW-0028">Amino-acid biosynthesis</keyword>
<keyword id="KW-0100">Branched-chain amino acid biosynthesis</keyword>
<keyword id="KW-0963">Cytoplasm</keyword>
<keyword id="KW-0432">Leucine biosynthesis</keyword>
<keyword id="KW-0460">Magnesium</keyword>
<keyword id="KW-0464">Manganese</keyword>
<keyword id="KW-0479">Metal-binding</keyword>
<keyword id="KW-0520">NAD</keyword>
<keyword id="KW-0560">Oxidoreductase</keyword>
<reference key="1">
    <citation type="journal article" date="2008" name="J. Bacteriol.">
        <title>Genome of the actinomycete plant pathogen Clavibacter michiganensis subsp. sepedonicus suggests recent niche adaptation.</title>
        <authorList>
            <person name="Bentley S.D."/>
            <person name="Corton C."/>
            <person name="Brown S.E."/>
            <person name="Barron A."/>
            <person name="Clark L."/>
            <person name="Doggett J."/>
            <person name="Harris B."/>
            <person name="Ormond D."/>
            <person name="Quail M.A."/>
            <person name="May G."/>
            <person name="Francis D."/>
            <person name="Knudson D."/>
            <person name="Parkhill J."/>
            <person name="Ishimaru C.A."/>
        </authorList>
    </citation>
    <scope>NUCLEOTIDE SEQUENCE [LARGE SCALE GENOMIC DNA]</scope>
    <source>
        <strain>ATCC 33113 / DSM 20744 / JCM 9667 / LMG 2889 / ICMP 2535 / C-1</strain>
    </source>
</reference>
<evidence type="ECO:0000255" key="1">
    <source>
        <dbReference type="HAMAP-Rule" id="MF_01035"/>
    </source>
</evidence>
<comment type="function">
    <text evidence="1">Catalyzes the oxidation of 3-carboxy-2-hydroxy-4-methylpentanoate (3-isopropylmalate) to 3-carboxy-4-methyl-2-oxopentanoate. The product decarboxylates to 4-methyl-2 oxopentanoate.</text>
</comment>
<comment type="catalytic activity">
    <reaction evidence="1">
        <text>(2R,3S)-3-isopropylmalate + NAD(+) = 4-methyl-2-oxopentanoate + CO2 + NADH</text>
        <dbReference type="Rhea" id="RHEA:32271"/>
        <dbReference type="ChEBI" id="CHEBI:16526"/>
        <dbReference type="ChEBI" id="CHEBI:17865"/>
        <dbReference type="ChEBI" id="CHEBI:35121"/>
        <dbReference type="ChEBI" id="CHEBI:57540"/>
        <dbReference type="ChEBI" id="CHEBI:57945"/>
        <dbReference type="EC" id="1.1.1.85"/>
    </reaction>
</comment>
<comment type="cofactor">
    <cofactor evidence="1">
        <name>Mg(2+)</name>
        <dbReference type="ChEBI" id="CHEBI:18420"/>
    </cofactor>
    <cofactor evidence="1">
        <name>Mn(2+)</name>
        <dbReference type="ChEBI" id="CHEBI:29035"/>
    </cofactor>
    <text evidence="1">Binds 1 Mg(2+) or Mn(2+) ion per subunit.</text>
</comment>
<comment type="pathway">
    <text evidence="1">Amino-acid biosynthesis; L-leucine biosynthesis; L-leucine from 3-methyl-2-oxobutanoate: step 3/4.</text>
</comment>
<comment type="subunit">
    <text evidence="1">Homodimer.</text>
</comment>
<comment type="subcellular location">
    <subcellularLocation>
        <location evidence="1">Cytoplasm</location>
    </subcellularLocation>
</comment>
<comment type="similarity">
    <text evidence="1">Belongs to the isocitrate and isopropylmalate dehydrogenases family. LeuB type 2 subfamily.</text>
</comment>
<protein>
    <recommendedName>
        <fullName evidence="1">3-isopropylmalate dehydrogenase</fullName>
        <ecNumber evidence="1">1.1.1.85</ecNumber>
    </recommendedName>
    <alternativeName>
        <fullName evidence="1">3-IPM-DH</fullName>
    </alternativeName>
    <alternativeName>
        <fullName evidence="1">Beta-IPM dehydrogenase</fullName>
        <shortName evidence="1">IMDH</shortName>
    </alternativeName>
</protein>
<feature type="chain" id="PRO_1000084277" description="3-isopropylmalate dehydrogenase">
    <location>
        <begin position="1"/>
        <end position="355"/>
    </location>
</feature>
<feature type="binding site" evidence="1">
    <location>
        <position position="98"/>
    </location>
    <ligand>
        <name>substrate</name>
    </ligand>
</feature>
<feature type="binding site" evidence="1">
    <location>
        <position position="108"/>
    </location>
    <ligand>
        <name>substrate</name>
    </ligand>
</feature>
<feature type="binding site" evidence="1">
    <location>
        <position position="132"/>
    </location>
    <ligand>
        <name>substrate</name>
    </ligand>
</feature>
<feature type="binding site" evidence="1">
    <location>
        <position position="223"/>
    </location>
    <ligand>
        <name>Mg(2+)</name>
        <dbReference type="ChEBI" id="CHEBI:18420"/>
    </ligand>
</feature>
<feature type="binding site" evidence="1">
    <location>
        <position position="223"/>
    </location>
    <ligand>
        <name>substrate</name>
    </ligand>
</feature>
<feature type="binding site" evidence="1">
    <location>
        <position position="247"/>
    </location>
    <ligand>
        <name>Mg(2+)</name>
        <dbReference type="ChEBI" id="CHEBI:18420"/>
    </ligand>
</feature>
<feature type="binding site" evidence="1">
    <location>
        <position position="251"/>
    </location>
    <ligand>
        <name>Mg(2+)</name>
        <dbReference type="ChEBI" id="CHEBI:18420"/>
    </ligand>
</feature>
<feature type="binding site" evidence="1">
    <location>
        <begin position="283"/>
        <end position="295"/>
    </location>
    <ligand>
        <name>NAD(+)</name>
        <dbReference type="ChEBI" id="CHEBI:57540"/>
    </ligand>
</feature>
<feature type="site" description="Important for catalysis" evidence="1">
    <location>
        <position position="139"/>
    </location>
</feature>
<feature type="site" description="Important for catalysis" evidence="1">
    <location>
        <position position="190"/>
    </location>
</feature>
<accession>B0RIP4</accession>
<gene>
    <name evidence="1" type="primary">leuB</name>
    <name type="ordered locus">CMS1424</name>
</gene>